<protein>
    <recommendedName>
        <fullName>Small nuclear ribonucleoprotein F</fullName>
        <shortName>snRNP-F</shortName>
    </recommendedName>
    <alternativeName>
        <fullName>Sm protein F</fullName>
        <shortName>Sm-F</shortName>
        <shortName>SmF</shortName>
    </alternativeName>
</protein>
<name>RUXF_HUMAN</name>
<proteinExistence type="evidence at protein level"/>
<reference key="1">
    <citation type="journal article" date="1995" name="EMBO J.">
        <title>snRNP Sm proteins share two evolutionarily conserved sequence motifs which are involved in Sm protein-protein interactions.</title>
        <authorList>
            <person name="Hermann H."/>
            <person name="Fabrizio P."/>
            <person name="Raker V.A."/>
            <person name="Foulaki K."/>
            <person name="Hornig H."/>
            <person name="Brahms H."/>
            <person name="Luehrmann R."/>
        </authorList>
    </citation>
    <scope>NUCLEOTIDE SEQUENCE [MRNA]</scope>
    <source>
        <tissue>Cervix carcinoma</tissue>
    </source>
</reference>
<reference key="2">
    <citation type="submission" date="2004-06" db="EMBL/GenBank/DDBJ databases">
        <title>Cloning of human full open reading frames in Gateway(TM) system entry vector (pDONR201).</title>
        <authorList>
            <person name="Ebert L."/>
            <person name="Schick M."/>
            <person name="Neubert P."/>
            <person name="Schatten R."/>
            <person name="Henze S."/>
            <person name="Korn B."/>
        </authorList>
    </citation>
    <scope>NUCLEOTIDE SEQUENCE [LARGE SCALE MRNA]</scope>
</reference>
<reference key="3">
    <citation type="journal article" date="2004" name="Nat. Genet.">
        <title>Complete sequencing and characterization of 21,243 full-length human cDNAs.</title>
        <authorList>
            <person name="Ota T."/>
            <person name="Suzuki Y."/>
            <person name="Nishikawa T."/>
            <person name="Otsuki T."/>
            <person name="Sugiyama T."/>
            <person name="Irie R."/>
            <person name="Wakamatsu A."/>
            <person name="Hayashi K."/>
            <person name="Sato H."/>
            <person name="Nagai K."/>
            <person name="Kimura K."/>
            <person name="Makita H."/>
            <person name="Sekine M."/>
            <person name="Obayashi M."/>
            <person name="Nishi T."/>
            <person name="Shibahara T."/>
            <person name="Tanaka T."/>
            <person name="Ishii S."/>
            <person name="Yamamoto J."/>
            <person name="Saito K."/>
            <person name="Kawai Y."/>
            <person name="Isono Y."/>
            <person name="Nakamura Y."/>
            <person name="Nagahari K."/>
            <person name="Murakami K."/>
            <person name="Yasuda T."/>
            <person name="Iwayanagi T."/>
            <person name="Wagatsuma M."/>
            <person name="Shiratori A."/>
            <person name="Sudo H."/>
            <person name="Hosoiri T."/>
            <person name="Kaku Y."/>
            <person name="Kodaira H."/>
            <person name="Kondo H."/>
            <person name="Sugawara M."/>
            <person name="Takahashi M."/>
            <person name="Kanda K."/>
            <person name="Yokoi T."/>
            <person name="Furuya T."/>
            <person name="Kikkawa E."/>
            <person name="Omura Y."/>
            <person name="Abe K."/>
            <person name="Kamihara K."/>
            <person name="Katsuta N."/>
            <person name="Sato K."/>
            <person name="Tanikawa M."/>
            <person name="Yamazaki M."/>
            <person name="Ninomiya K."/>
            <person name="Ishibashi T."/>
            <person name="Yamashita H."/>
            <person name="Murakawa K."/>
            <person name="Fujimori K."/>
            <person name="Tanai H."/>
            <person name="Kimata M."/>
            <person name="Watanabe M."/>
            <person name="Hiraoka S."/>
            <person name="Chiba Y."/>
            <person name="Ishida S."/>
            <person name="Ono Y."/>
            <person name="Takiguchi S."/>
            <person name="Watanabe S."/>
            <person name="Yosida M."/>
            <person name="Hotuta T."/>
            <person name="Kusano J."/>
            <person name="Kanehori K."/>
            <person name="Takahashi-Fujii A."/>
            <person name="Hara H."/>
            <person name="Tanase T.-O."/>
            <person name="Nomura Y."/>
            <person name="Togiya S."/>
            <person name="Komai F."/>
            <person name="Hara R."/>
            <person name="Takeuchi K."/>
            <person name="Arita M."/>
            <person name="Imose N."/>
            <person name="Musashino K."/>
            <person name="Yuuki H."/>
            <person name="Oshima A."/>
            <person name="Sasaki N."/>
            <person name="Aotsuka S."/>
            <person name="Yoshikawa Y."/>
            <person name="Matsunawa H."/>
            <person name="Ichihara T."/>
            <person name="Shiohata N."/>
            <person name="Sano S."/>
            <person name="Moriya S."/>
            <person name="Momiyama H."/>
            <person name="Satoh N."/>
            <person name="Takami S."/>
            <person name="Terashima Y."/>
            <person name="Suzuki O."/>
            <person name="Nakagawa S."/>
            <person name="Senoh A."/>
            <person name="Mizoguchi H."/>
            <person name="Goto Y."/>
            <person name="Shimizu F."/>
            <person name="Wakebe H."/>
            <person name="Hishigaki H."/>
            <person name="Watanabe T."/>
            <person name="Sugiyama A."/>
            <person name="Takemoto M."/>
            <person name="Kawakami B."/>
            <person name="Yamazaki M."/>
            <person name="Watanabe K."/>
            <person name="Kumagai A."/>
            <person name="Itakura S."/>
            <person name="Fukuzumi Y."/>
            <person name="Fujimori Y."/>
            <person name="Komiyama M."/>
            <person name="Tashiro H."/>
            <person name="Tanigami A."/>
            <person name="Fujiwara T."/>
            <person name="Ono T."/>
            <person name="Yamada K."/>
            <person name="Fujii Y."/>
            <person name="Ozaki K."/>
            <person name="Hirao M."/>
            <person name="Ohmori Y."/>
            <person name="Kawabata A."/>
            <person name="Hikiji T."/>
            <person name="Kobatake N."/>
            <person name="Inagaki H."/>
            <person name="Ikema Y."/>
            <person name="Okamoto S."/>
            <person name="Okitani R."/>
            <person name="Kawakami T."/>
            <person name="Noguchi S."/>
            <person name="Itoh T."/>
            <person name="Shigeta K."/>
            <person name="Senba T."/>
            <person name="Matsumura K."/>
            <person name="Nakajima Y."/>
            <person name="Mizuno T."/>
            <person name="Morinaga M."/>
            <person name="Sasaki M."/>
            <person name="Togashi T."/>
            <person name="Oyama M."/>
            <person name="Hata H."/>
            <person name="Watanabe M."/>
            <person name="Komatsu T."/>
            <person name="Mizushima-Sugano J."/>
            <person name="Satoh T."/>
            <person name="Shirai Y."/>
            <person name="Takahashi Y."/>
            <person name="Nakagawa K."/>
            <person name="Okumura K."/>
            <person name="Nagase T."/>
            <person name="Nomura N."/>
            <person name="Kikuchi H."/>
            <person name="Masuho Y."/>
            <person name="Yamashita R."/>
            <person name="Nakai K."/>
            <person name="Yada T."/>
            <person name="Nakamura Y."/>
            <person name="Ohara O."/>
            <person name="Isogai T."/>
            <person name="Sugano S."/>
        </authorList>
    </citation>
    <scope>NUCLEOTIDE SEQUENCE [LARGE SCALE MRNA]</scope>
    <source>
        <tissue>Amygdala</tissue>
    </source>
</reference>
<reference key="4">
    <citation type="submission" date="2005-07" db="EMBL/GenBank/DDBJ databases">
        <authorList>
            <person name="Mural R.J."/>
            <person name="Istrail S."/>
            <person name="Sutton G.G."/>
            <person name="Florea L."/>
            <person name="Halpern A.L."/>
            <person name="Mobarry C.M."/>
            <person name="Lippert R."/>
            <person name="Walenz B."/>
            <person name="Shatkay H."/>
            <person name="Dew I."/>
            <person name="Miller J.R."/>
            <person name="Flanigan M.J."/>
            <person name="Edwards N.J."/>
            <person name="Bolanos R."/>
            <person name="Fasulo D."/>
            <person name="Halldorsson B.V."/>
            <person name="Hannenhalli S."/>
            <person name="Turner R."/>
            <person name="Yooseph S."/>
            <person name="Lu F."/>
            <person name="Nusskern D.R."/>
            <person name="Shue B.C."/>
            <person name="Zheng X.H."/>
            <person name="Zhong F."/>
            <person name="Delcher A.L."/>
            <person name="Huson D.H."/>
            <person name="Kravitz S.A."/>
            <person name="Mouchard L."/>
            <person name="Reinert K."/>
            <person name="Remington K.A."/>
            <person name="Clark A.G."/>
            <person name="Waterman M.S."/>
            <person name="Eichler E.E."/>
            <person name="Adams M.D."/>
            <person name="Hunkapiller M.W."/>
            <person name="Myers E.W."/>
            <person name="Venter J.C."/>
        </authorList>
    </citation>
    <scope>NUCLEOTIDE SEQUENCE [LARGE SCALE GENOMIC DNA]</scope>
</reference>
<reference key="5">
    <citation type="journal article" date="2004" name="Genome Res.">
        <title>The status, quality, and expansion of the NIH full-length cDNA project: the Mammalian Gene Collection (MGC).</title>
        <authorList>
            <consortium name="The MGC Project Team"/>
        </authorList>
    </citation>
    <scope>NUCLEOTIDE SEQUENCE [LARGE SCALE MRNA]</scope>
    <source>
        <tissue>Colon</tissue>
    </source>
</reference>
<reference key="6">
    <citation type="submission" date="2008-12" db="UniProtKB">
        <authorList>
            <person name="Bienvenut W.V."/>
            <person name="Lilla S."/>
            <person name="von Kriegsheim A."/>
            <person name="Lempens A."/>
            <person name="Kolch W."/>
        </authorList>
    </citation>
    <scope>PROTEIN SEQUENCE OF 2-22 AND 66-86</scope>
    <scope>CLEAVAGE OF INITIATOR METHIONINE</scope>
    <scope>ACETYLATION AT SER-2</scope>
    <scope>IDENTIFICATION BY MASS SPECTROMETRY</scope>
    <source>
        <tissue>Ovarian carcinoma</tissue>
    </source>
</reference>
<reference key="7">
    <citation type="journal article" date="2001" name="EMBO J.">
        <title>Purified U7 snRNPs lack the Sm proteins D1 and D2 but contain Lsm10, a new 14 kDa Sm D1-like protein.</title>
        <authorList>
            <person name="Pillai R.S."/>
            <person name="Will C.L."/>
            <person name="Luehrmann R."/>
            <person name="Schuemperli D."/>
            <person name="Mueller B."/>
        </authorList>
    </citation>
    <scope>IDENTIFICATION IN THE U7 SNRNP COMPLEX</scope>
    <scope>SUBUNIT</scope>
    <scope>SUBCELLULAR LOCATION</scope>
</reference>
<reference key="8">
    <citation type="journal article" date="2002" name="RNA">
        <title>Purification and characterization of native spliceosomes suitable for three-dimensional structural analysis.</title>
        <authorList>
            <person name="Jurica M.S."/>
            <person name="Licklider L.J."/>
            <person name="Gygi S.P."/>
            <person name="Grigorieff N."/>
            <person name="Moore M.J."/>
        </authorList>
    </citation>
    <scope>IDENTIFICATION BY MASS SPECTROMETRY</scope>
    <scope>IDENTIFICATION IN THE SPLICEOSOMAL C COMPLEX</scope>
    <scope>FUNCTION</scope>
    <scope>SUBCELLULAR LOCATION</scope>
    <scope>SUBUNIT</scope>
</reference>
<reference key="9">
    <citation type="journal article" date="2003" name="Genes Dev.">
        <title>Unique Sm core structure of U7 snRNPs: assembly by a specialized SMN complex and the role of a new component, Lsm11, in histone RNA processing.</title>
        <authorList>
            <person name="Pillai R.S."/>
            <person name="Grimmler M."/>
            <person name="Meister G."/>
            <person name="Will C.L."/>
            <person name="Luehrmann R."/>
            <person name="Fischer U."/>
            <person name="Schuemperli D."/>
        </authorList>
    </citation>
    <scope>FUNCTION OF THE U7 SNRNP COMPLEX</scope>
</reference>
<reference key="10">
    <citation type="journal article" date="2003" name="Nature">
        <title>Proteomic characterization of the human centrosome by protein correlation profiling.</title>
        <authorList>
            <person name="Andersen J.S."/>
            <person name="Wilkinson C.J."/>
            <person name="Mayor T."/>
            <person name="Mortensen P."/>
            <person name="Nigg E.A."/>
            <person name="Mann M."/>
        </authorList>
    </citation>
    <scope>IDENTIFICATION BY MASS SPECTROMETRY</scope>
    <source>
        <tissue>Lymphoblast</tissue>
    </source>
</reference>
<reference key="11">
    <citation type="journal article" date="2004" name="RNA">
        <title>The human 18S U11/U12 snRNP contains a set of novel proteins not found in the U2-dependent spliceosome.</title>
        <authorList>
            <person name="Will C.L."/>
            <person name="Schneider C."/>
            <person name="Hossbach M."/>
            <person name="Urlaub H."/>
            <person name="Rauhut R."/>
            <person name="Elbashir S."/>
            <person name="Tuschl T."/>
            <person name="Luehrmann R."/>
        </authorList>
    </citation>
    <scope>IDENTIFICATION IN A COMPLEX WITH THE MINOR SPLICEOSOME</scope>
    <scope>IDENTIFICATION BY MASS SPECTROMETRY</scope>
</reference>
<reference key="12">
    <citation type="journal article" date="2005" name="Mol. Cell. Biol.">
        <title>Specific sequence features, recognized by the SMN complex, identify snRNAs and determine their fate as snRNPs.</title>
        <authorList>
            <person name="Golembe T.J."/>
            <person name="Yong J."/>
            <person name="Dreyfuss G."/>
        </authorList>
    </citation>
    <scope>IDENTIFICATION IN THE SMN-SM COMPLEX</scope>
</reference>
<reference key="13">
    <citation type="journal article" date="2008" name="Cell">
        <title>An assembly chaperone collaborates with the SMN complex to generate spliceosomal SnRNPs.</title>
        <authorList>
            <person name="Chari A."/>
            <person name="Golas M.M."/>
            <person name="Klingenhager M."/>
            <person name="Neuenkirchen N."/>
            <person name="Sander B."/>
            <person name="Englbrecht C."/>
            <person name="Sickmann A."/>
            <person name="Stark H."/>
            <person name="Fischer U."/>
        </authorList>
    </citation>
    <scope>FUNCTION IN SNRNP BIOGENESIS</scope>
    <scope>IDENTIFICATION IN 6S PICLN-SM COMPLEX</scope>
    <scope>IDENTIFICATION IN SMN-SM COMPLEX</scope>
    <scope>SUBCELLULAR LOCATION</scope>
</reference>
<reference key="14">
    <citation type="journal article" date="2011" name="BMC Syst. Biol.">
        <title>Initial characterization of the human central proteome.</title>
        <authorList>
            <person name="Burkard T.R."/>
            <person name="Planyavsky M."/>
            <person name="Kaupe I."/>
            <person name="Breitwieser F.P."/>
            <person name="Buerckstuemmer T."/>
            <person name="Bennett K.L."/>
            <person name="Superti-Furga G."/>
            <person name="Colinge J."/>
        </authorList>
    </citation>
    <scope>IDENTIFICATION BY MASS SPECTROMETRY [LARGE SCALE ANALYSIS]</scope>
</reference>
<reference key="15">
    <citation type="journal article" date="2014" name="J. Proteomics">
        <title>An enzyme assisted RP-RPLC approach for in-depth analysis of human liver phosphoproteome.</title>
        <authorList>
            <person name="Bian Y."/>
            <person name="Song C."/>
            <person name="Cheng K."/>
            <person name="Dong M."/>
            <person name="Wang F."/>
            <person name="Huang J."/>
            <person name="Sun D."/>
            <person name="Wang L."/>
            <person name="Ye M."/>
            <person name="Zou H."/>
        </authorList>
    </citation>
    <scope>IDENTIFICATION BY MASS SPECTROMETRY [LARGE SCALE ANALYSIS]</scope>
    <source>
        <tissue>Liver</tissue>
    </source>
</reference>
<reference key="16">
    <citation type="journal article" date="2009" name="Nature">
        <title>Crystal structure of human spliceosomal U1 snRNP at 5.5 A resolution.</title>
        <authorList>
            <person name="Pomeranz Krummel D.A."/>
            <person name="Oubridge C."/>
            <person name="Leung A.K."/>
            <person name="Li J."/>
            <person name="Nagai K."/>
        </authorList>
    </citation>
    <scope>X-RAY CRYSTALLOGRAPHY (5.49 ANGSTROMS) IN SPLICEOSOMAL U1 SNRNP</scope>
    <scope>FUNCTION</scope>
    <scope>SUBUNIT</scope>
</reference>
<reference evidence="28" key="17">
    <citation type="journal article" date="2011" name="Cell">
        <title>Structure of a key intermediate of the SMN complex reveals Gemin2's crucial function in snRNP assembly.</title>
        <authorList>
            <person name="Zhang R."/>
            <person name="So B.R."/>
            <person name="Li P."/>
            <person name="Yong J."/>
            <person name="Glisovic T."/>
            <person name="Wan L."/>
            <person name="Dreyfuss G."/>
        </authorList>
    </citation>
    <scope>X-RAY CRYSTALLOGRAPHY (2.50 ANGSTROMS) IN COMPLEX WITH SNRPD1; SNRPD2; SNRPE; SNRPG; SMN1 AND GEMIN2</scope>
    <scope>INTERACTION WITH GEMIN2; SNRPE AND SNRPD2</scope>
</reference>
<reference key="18">
    <citation type="journal article" date="2011" name="Nature">
        <title>Structure of the spliceosomal U4 snRNP core domain and its implication for snRNP biogenesis.</title>
        <authorList>
            <person name="Leung A.K."/>
            <person name="Nagai K."/>
            <person name="Li J."/>
        </authorList>
    </citation>
    <scope>X-RAY CRYSTALLOGRAPHY (3.60 ANGSTROMS) IN SPLICEOSOMAL CORE U4 SNRNP</scope>
    <scope>SUBUNIT</scope>
</reference>
<reference key="19">
    <citation type="journal article" date="2013" name="Mol. Cell">
        <title>Structural basis of assembly chaperone-mediated snRNP formation.</title>
        <authorList>
            <person name="Grimm C."/>
            <person name="Chari A."/>
            <person name="Pelz J.P."/>
            <person name="Kuper J."/>
            <person name="Kisker C."/>
            <person name="Diederichs K."/>
            <person name="Stark H."/>
            <person name="Schindelin H."/>
            <person name="Fischer U."/>
        </authorList>
    </citation>
    <scope>X-RAY CRYSTALLOGRAPHY (1.90 ANGSTROMS) IN 6S PICLN-SM COMPLEX</scope>
    <scope>IDENTIFICATION IN 6S PICLN-SM COMPLEX</scope>
    <scope>FUNCTION IN CORE U1 SNRNP BIOGENESIS</scope>
</reference>
<reference evidence="24" key="20">
    <citation type="journal article" date="2015" name="Elife">
        <title>Crystal structure of human U1 snRNP, a small nuclear ribonucleoprotein particle, reveals the mechanism of 5' splice site recognition.</title>
        <authorList>
            <person name="Kondo Y."/>
            <person name="Oubridge C."/>
            <person name="van Roon A.M."/>
            <person name="Nagai K."/>
        </authorList>
    </citation>
    <scope>X-RAY CRYSTALLOGRAPHY (3.30 ANGSTROMS) OF 1-75</scope>
    <scope>SUBUNIT</scope>
</reference>
<reference evidence="23" key="21">
    <citation type="journal article" date="2016" name="Science">
        <title>Molecular architecture of the human U4/U6.U5 tri-snRNP.</title>
        <authorList>
            <person name="Agafonov D.E."/>
            <person name="Kastner B."/>
            <person name="Dybkov O."/>
            <person name="Hofele R.V."/>
            <person name="Liu W.T."/>
            <person name="Urlaub H."/>
            <person name="Luhrmann R."/>
            <person name="Stark H."/>
        </authorList>
    </citation>
    <scope>STRUCTURE BY ELECTRON MICROSCOPY (7.00 ANGSTROMS)</scope>
    <scope>SUBCELLULAR LOCATION</scope>
    <scope>SUBUNIT</scope>
    <scope>IDENTIFICATION BY MASS SPECTROMETRY</scope>
</reference>
<reference evidence="27" key="22">
    <citation type="journal article" date="2017" name="Cell">
        <title>An Atomic Structure of the Human Spliceosome.</title>
        <authorList>
            <person name="Zhang X."/>
            <person name="Yan C."/>
            <person name="Hang J."/>
            <person name="Finci L.I."/>
            <person name="Lei J."/>
            <person name="Shi Y."/>
        </authorList>
    </citation>
    <scope>STRUCTURE BY ELECTRON MICROSCOPY (3.60 ANGSTROMS)</scope>
    <scope>FUNCTION</scope>
    <scope>SUBCELLULAR LOCATION</scope>
    <scope>SUBUNIT</scope>
</reference>
<reference evidence="26" key="23">
    <citation type="journal article" date="2017" name="Cell">
        <title>Cryo-EM Structure of a Pre-catalytic Human Spliceosome Primed for Activation.</title>
        <authorList>
            <person name="Bertram K."/>
            <person name="Agafonov D.E."/>
            <person name="Dybkov O."/>
            <person name="Haselbach D."/>
            <person name="Leelaram M.N."/>
            <person name="Will C.L."/>
            <person name="Urlaub H."/>
            <person name="Kastner B."/>
            <person name="Luhrmann R."/>
            <person name="Stark H."/>
        </authorList>
    </citation>
    <scope>STRUCTURE BY ELECTRON MICROSCOPY (4.50 ANGSTROMS)</scope>
    <scope>FUNCTION</scope>
    <scope>SUBCELLULAR LOCATION</scope>
    <scope>SUBUNIT</scope>
    <scope>IDENTIFICATION BY MASS SPECTROMETRY</scope>
</reference>
<reference evidence="25" key="24">
    <citation type="journal article" date="2017" name="Nature">
        <title>Cryo-EM structure of a human spliceosome activated for step 2 of splicing.</title>
        <authorList>
            <person name="Bertram K."/>
            <person name="Agafonov D.E."/>
            <person name="Liu W.T."/>
            <person name="Dybkov O."/>
            <person name="Will C.L."/>
            <person name="Hartmuth K."/>
            <person name="Urlaub H."/>
            <person name="Kastner B."/>
            <person name="Stark H."/>
            <person name="Luhrmann R."/>
        </authorList>
    </citation>
    <scope>STRUCTURE BY ELECTRON MICROSCOPY (5.90 ANGSTROMS)</scope>
    <scope>FUNCTION</scope>
    <scope>SUBCELLULAR LOCATION</scope>
    <scope>SUBUNIT</scope>
    <scope>IDENTIFICATION BY MASS SPECTROMETRY</scope>
</reference>
<reference evidence="29 30 31" key="25">
    <citation type="journal article" date="2020" name="Nucleic Acids Res.">
        <title>Negative cooperativity between Gemin2 and RNA provides insights into RNA selection and the SMN complex's release in snRNP assembly.</title>
        <authorList>
            <person name="Yi H."/>
            <person name="Mu L."/>
            <person name="Shen C."/>
            <person name="Kong X."/>
            <person name="Wang Y."/>
            <person name="Hou Y."/>
            <person name="Zhang R."/>
        </authorList>
    </citation>
    <scope>X-RAY CRYSTALLOGRAPHY (3.12 ANGSTROMS) IN COMPLEX WITH GEMIN2; SNRPD1; SNRPD2; SNRPE; SNRPG AND SMN1</scope>
    <scope>INTERACTION WITH GEMIN2; SNRPD2 AND SNRPE</scope>
</reference>
<reference evidence="32" key="26">
    <citation type="journal article" date="2020" name="Nature">
        <title>Molecular architecture of the human 17S U2 snRNP.</title>
        <authorList>
            <person name="Zhang Z."/>
            <person name="Will C.L."/>
            <person name="Bertram K."/>
            <person name="Dybkov O."/>
            <person name="Hartmuth K."/>
            <person name="Agafonov D.E."/>
            <person name="Hofele R."/>
            <person name="Urlaub H."/>
            <person name="Kastner B."/>
            <person name="Luehrmann R."/>
            <person name="Stark H."/>
        </authorList>
    </citation>
    <scope>STRUCTURE BY ELECTRON MICROSCOPY (4.10 ANGSTROMS) IN COMPLEX WITH THE 17S U2 SNRNP COMPLEX</scope>
    <scope>FUNCTION</scope>
    <scope>IDENTIFICATION IN THE 17S U2 SNRNP COMPLEX</scope>
</reference>
<reference evidence="33" key="27">
    <citation type="journal article" date="2021" name="Science">
        <title>Structure of the activated human minor spliceosome.</title>
        <authorList>
            <person name="Bai R."/>
            <person name="Wan R."/>
            <person name="Wang L."/>
            <person name="Xu K."/>
            <person name="Zhang Q."/>
            <person name="Lei J."/>
            <person name="Shi Y."/>
        </authorList>
    </citation>
    <scope>STRUCTURE BY ELECTRON MICROSCOPY (2.89 ANGSTROMS)</scope>
    <scope>SUBUNIT</scope>
</reference>
<reference evidence="34" key="28">
    <citation type="journal article" date="2023" name="Nat. Commun.">
        <title>Mechanisms of the RNA helicases DDX42 and DDX46 in human U2 snRNP assembly.</title>
        <authorList>
            <person name="Yang F."/>
            <person name="Bian T."/>
            <person name="Zhan X."/>
            <person name="Chen Z."/>
            <person name="Xing Z."/>
            <person name="Larsen N.A."/>
            <person name="Zhang X."/>
            <person name="Shi Y."/>
        </authorList>
    </citation>
    <scope>STRUCTURE BY ELECTRON MICROSCOPY (2.70 ANGSTROMS) IN COMPLEX WITH THE 17S U2 SNRNP COMPLEX</scope>
    <scope>IDENTIFICATION IN THE 17S U2 SNRNP COMPLEX</scope>
</reference>
<accession>P62306</accession>
<accession>A2VCR2</accession>
<accession>B2R498</accession>
<accession>Q15356</accession>
<accession>Q6IBQ1</accession>
<accession>Q6P4I0</accession>
<keyword id="KW-0002">3D-structure</keyword>
<keyword id="KW-0007">Acetylation</keyword>
<keyword id="KW-0963">Cytoplasm</keyword>
<keyword id="KW-0903">Direct protein sequencing</keyword>
<keyword id="KW-0507">mRNA processing</keyword>
<keyword id="KW-0508">mRNA splicing</keyword>
<keyword id="KW-0539">Nucleus</keyword>
<keyword id="KW-1267">Proteomics identification</keyword>
<keyword id="KW-1185">Reference proteome</keyword>
<keyword id="KW-0687">Ribonucleoprotein</keyword>
<keyword id="KW-0694">RNA-binding</keyword>
<keyword id="KW-0747">Spliceosome</keyword>
<comment type="function">
    <text evidence="3 4 5 7 8 11 12 13 14 15 16 18">Plays a role in pre-mRNA splicing as a core component of the spliceosomal U1, U2, U4 and U5 small nuclear ribonucleoproteins (snRNPs), the building blocks of the spliceosome (PubMed:11991638, PubMed:18984161, PubMed:19325628, PubMed:23333303, PubMed:25555158, PubMed:26912367, PubMed:28076346, PubMed:28502770, PubMed:28781166, PubMed:32494006). Component of both the pre-catalytic spliceosome B complex and activated spliceosome C complexes (PubMed:11991638, PubMed:28076346, PubMed:28502770, PubMed:28781166). As a component of the minor spliceosome, involved in the splicing of U12-type introns in pre-mRNAs (PubMed:15146077). As part of the U7 snRNP it is involved in histone 3'-end processing (PubMed:12975319).</text>
</comment>
<comment type="subunit">
    <text evidence="2 3 5 6 7 8 9 10 11 12 13 14 15 16 17 18 19 20">Core component of the spliceosomal U1, U2, U4 and U5 small nuclear ribonucleoproteins (snRNPs), the building blocks of the spliceosome (PubMed:11991638, PubMed:19325628, PubMed:21516107, PubMed:25555158, PubMed:26912367, PubMed:28076346, PubMed:28502770, PubMed:28781166, PubMed:32494006, PubMed:36797247). Most spliceosomal snRNPs contain a common set of Sm proteins, SNRPB, SNRPD1, SNRPD2, SNRPD3, SNRPE, SNRPF and SNRPG that assemble in a heptameric protein ring on the Sm site of the small nuclear RNA to form the core snRNP (PubMed:19325628, PubMed:21516107, PubMed:25555158, PubMed:26912367, PubMed:28076346, PubMed:28502770, PubMed:28781166). Component of the U1 snRNP (PubMed:19325628, PubMed:25555158). The U1 snRNP is composed of the U1 snRNA and the 7 core Sm proteins SNRPB, SNRPD1, SNRPD2, SNRPD3, SNRPE, SNRPF and SNRPG, and at least three U1 snRNP-specific proteins SNRNP70/U1-70K, SNRPA/U1-A and SNRPC/U1-C (PubMed:19325628, PubMed:25555158). Component of the U4/U6-U5 tri-snRNP complex composed of the U4, U6 and U5 snRNAs and at least PRPF3, PRPF4, PRPF6, PRPF8, PRPF31, SNRNP200, TXNL4A, SNRNP40, SNRPB, SNRPD1, SNRPD2, SNRPD3, SNRPE, SNRPF, SNRPG, DDX23, CD2BP2, PPIH, SNU13, EFTUD2, SART1 and USP39, plus LSM2, LSM3, LSM4, LSM5, LSM6, LSM7 and LSM8 (PubMed:26912367). Component of the U7 snRNP complex, or U7 Sm protein core complex, that is composed of the U7 snRNA and at least LSM10, LSM11, SNRPB, SNRPD3, SNRPE, SNRPF and SNRPG; the complex does not contain SNRPD1 and SNRPD2 (PubMed:11574479). Component of the minor spliceosome, which splices U12-type introns (PubMed:15146077, PubMed:33509932). Part of the SMN-Sm complex that contains SMN1, GEMIN2/SIP1, DDX20/GEMIN3, GEMIN4, GEMIN5, GEMIN6, GEMIN7, GEMIN8, STRAP/UNRIP and the Sm proteins SNRPB, SNRPD1, SNRPD2, SNRPD3, SNRPE, SNRPF and SNRPG; catalyzes core snRNPs assembly (PubMed:16314521, PubMed:18984161). Forms a 6S pICln-Sm complex composed of CLNS1A/pICln, SNRPD1, SNRPD2, SNRPE, SNRPF and SNRPG; ring-like structure where CLNS1A/pICln mimics additional Sm proteins and which is unable to assemble into the core snRNP (PubMed:18984161, PubMed:23333303). Interacts with GEMIN2 (via N-terminus); the interaction is direct (PubMed:21816274, PubMed:31799625). Interacts with SNRPD2; the interaction is direct (PubMed:21816274, PubMed:31799625). Interacts with SNRPE; the interaction is direct (PubMed:21816274, PubMed:31799625).</text>
</comment>
<comment type="interaction">
    <interactant intactId="EBI-356900">
        <id>P62306</id>
    </interactant>
    <interactant intactId="EBI-724693">
        <id>P54105</id>
        <label>CLNS1A</label>
    </interactant>
    <organismsDiffer>false</organismsDiffer>
    <experiments>9</experiments>
</comment>
<comment type="interaction">
    <interactant intactId="EBI-356900">
        <id>P62306</id>
    </interactant>
    <interactant intactId="EBI-945751">
        <id>P38432</id>
        <label>COIL</label>
    </interactant>
    <organismsDiffer>false</organismsDiffer>
    <experiments>7</experiments>
</comment>
<comment type="interaction">
    <interactant intactId="EBI-356900">
        <id>P62306</id>
    </interactant>
    <interactant intactId="EBI-443648">
        <id>O14893</id>
        <label>GEMIN2</label>
    </interactant>
    <organismsDiffer>false</organismsDiffer>
    <experiments>14</experiments>
</comment>
<comment type="interaction">
    <interactant intactId="EBI-356900">
        <id>P62306</id>
    </interactant>
    <interactant intactId="EBI-752301">
        <id>Q8WXD5</id>
        <label>GEMIN6</label>
    </interactant>
    <organismsDiffer>false</organismsDiffer>
    <experiments>5</experiments>
</comment>
<comment type="interaction">
    <interactant intactId="EBI-356900">
        <id>P62306</id>
    </interactant>
    <interactant intactId="EBI-748420">
        <id>Q9NSC5</id>
        <label>HOMER3</label>
    </interactant>
    <organismsDiffer>false</organismsDiffer>
    <experiments>9</experiments>
</comment>
<comment type="interaction">
    <interactant intactId="EBI-356900">
        <id>P62306</id>
    </interactant>
    <interactant intactId="EBI-466029">
        <id>P42858</id>
        <label>HTT</label>
    </interactant>
    <organismsDiffer>false</organismsDiffer>
    <experiments>3</experiments>
</comment>
<comment type="interaction">
    <interactant intactId="EBI-356900">
        <id>P62306</id>
    </interactant>
    <interactant intactId="EBI-745305">
        <id>Q13422</id>
        <label>IKZF1</label>
    </interactant>
    <organismsDiffer>false</organismsDiffer>
    <experiments>3</experiments>
</comment>
<comment type="interaction">
    <interactant intactId="EBI-356900">
        <id>P62306</id>
    </interactant>
    <interactant intactId="EBI-11522367">
        <id>Q13422-7</id>
        <label>IKZF1</label>
    </interactant>
    <organismsDiffer>false</organismsDiffer>
    <experiments>3</experiments>
</comment>
<comment type="interaction">
    <interactant intactId="EBI-356900">
        <id>P62306</id>
    </interactant>
    <interactant intactId="EBI-739832">
        <id>Q8TBB1</id>
        <label>LNX1</label>
    </interactant>
    <organismsDiffer>false</organismsDiffer>
    <experiments>3</experiments>
</comment>
<comment type="interaction">
    <interactant intactId="EBI-356900">
        <id>P62306</id>
    </interactant>
    <interactant intactId="EBI-348239">
        <id>P62310</id>
        <label>LSM3</label>
    </interactant>
    <organismsDiffer>false</organismsDiffer>
    <experiments>4</experiments>
</comment>
<comment type="interaction">
    <interactant intactId="EBI-356900">
        <id>P62306</id>
    </interactant>
    <interactant intactId="EBI-373007">
        <id>Q9Y4Y9</id>
        <label>LSM5</label>
    </interactant>
    <organismsDiffer>false</organismsDiffer>
    <experiments>13</experiments>
</comment>
<comment type="interaction">
    <interactant intactId="EBI-356900">
        <id>P62306</id>
    </interactant>
    <interactant intactId="EBI-373310">
        <id>P62312</id>
        <label>LSM6</label>
    </interactant>
    <organismsDiffer>false</organismsDiffer>
    <experiments>3</experiments>
</comment>
<comment type="interaction">
    <interactant intactId="EBI-356900">
        <id>P62306</id>
    </interactant>
    <interactant intactId="EBI-348372">
        <id>Q9UK45</id>
        <label>LSM7</label>
    </interactant>
    <organismsDiffer>false</organismsDiffer>
    <experiments>7</experiments>
</comment>
<comment type="interaction">
    <interactant intactId="EBI-356900">
        <id>P62306</id>
    </interactant>
    <interactant intactId="EBI-16439278">
        <id>Q6FHY5</id>
        <label>MEOX2</label>
    </interactant>
    <organismsDiffer>false</organismsDiffer>
    <experiments>3</experiments>
</comment>
<comment type="interaction">
    <interactant intactId="EBI-356900">
        <id>P62306</id>
    </interactant>
    <interactant intactId="EBI-2828285">
        <id>Q9H1P3</id>
        <label>OSBPL2</label>
    </interactant>
    <organismsDiffer>false</organismsDiffer>
    <experiments>3</experiments>
</comment>
<comment type="interaction">
    <interactant intactId="EBI-356900">
        <id>P62306</id>
    </interactant>
    <interactant intactId="EBI-358122">
        <id>P32969</id>
        <label>RPL9P9</label>
    </interactant>
    <organismsDiffer>false</organismsDiffer>
    <experiments>3</experiments>
</comment>
<comment type="interaction">
    <interactant intactId="EBI-356900">
        <id>P62306</id>
    </interactant>
    <interactant intactId="EBI-2462271">
        <id>Q15428</id>
        <label>SF3A2</label>
    </interactant>
    <organismsDiffer>false</organismsDiffer>
    <experiments>6</experiments>
</comment>
<comment type="interaction">
    <interactant intactId="EBI-356900">
        <id>P62306</id>
    </interactant>
    <interactant intactId="EBI-876439">
        <id>P09661</id>
        <label>SNRPA1</label>
    </interactant>
    <organismsDiffer>false</organismsDiffer>
    <experiments>5</experiments>
</comment>
<comment type="interaction">
    <interactant intactId="EBI-356900">
        <id>P62306</id>
    </interactant>
    <interactant intactId="EBI-297993">
        <id>P62316</id>
        <label>SNRPD2</label>
    </interactant>
    <organismsDiffer>false</organismsDiffer>
    <experiments>15</experiments>
</comment>
<comment type="interaction">
    <interactant intactId="EBI-356900">
        <id>P62306</id>
    </interactant>
    <interactant intactId="EBI-348082">
        <id>P62304</id>
        <label>SNRPE</label>
    </interactant>
    <organismsDiffer>false</organismsDiffer>
    <experiments>14</experiments>
</comment>
<comment type="interaction">
    <interactant intactId="EBI-356900">
        <id>P62306</id>
    </interactant>
    <interactant intactId="EBI-624585">
        <id>P62308</id>
        <label>SNRPG</label>
    </interactant>
    <organismsDiffer>false</organismsDiffer>
    <experiments>3</experiments>
</comment>
<comment type="subcellular location">
    <subcellularLocation>
        <location evidence="7">Cytoplasm</location>
        <location evidence="7">Cytosol</location>
    </subcellularLocation>
    <subcellularLocation>
        <location evidence="2 3 13 14 15 16">Nucleus</location>
    </subcellularLocation>
    <text evidence="22">SMN-mediated assembly into core snRNPs occurs in the cytosol before SMN-mediated transport to the nucleus to be included in spliceosomes.</text>
</comment>
<comment type="similarity">
    <text evidence="22">Belongs to the snRNP Sm proteins family. SmF/LSm6 subfamily.</text>
</comment>
<gene>
    <name type="primary">SNRPF</name>
    <name type="synonym">PBSCF</name>
</gene>
<sequence>MSLPLNPKPFLNGLTGKPVMVKLKWGMEYKGYLVSVDGYMNMQLANTEEYIDGALSGHLGEVLIRCNNVLYIRGVEEEEEDGEMRE</sequence>
<evidence type="ECO:0000255" key="1">
    <source>
        <dbReference type="PROSITE-ProRule" id="PRU01346"/>
    </source>
</evidence>
<evidence type="ECO:0000269" key="2">
    <source>
    </source>
</evidence>
<evidence type="ECO:0000269" key="3">
    <source>
    </source>
</evidence>
<evidence type="ECO:0000269" key="4">
    <source>
    </source>
</evidence>
<evidence type="ECO:0000269" key="5">
    <source>
    </source>
</evidence>
<evidence type="ECO:0000269" key="6">
    <source>
    </source>
</evidence>
<evidence type="ECO:0000269" key="7">
    <source>
    </source>
</evidence>
<evidence type="ECO:0000269" key="8">
    <source>
    </source>
</evidence>
<evidence type="ECO:0000269" key="9">
    <source>
    </source>
</evidence>
<evidence type="ECO:0000269" key="10">
    <source>
    </source>
</evidence>
<evidence type="ECO:0000269" key="11">
    <source>
    </source>
</evidence>
<evidence type="ECO:0000269" key="12">
    <source>
    </source>
</evidence>
<evidence type="ECO:0000269" key="13">
    <source>
    </source>
</evidence>
<evidence type="ECO:0000269" key="14">
    <source>
    </source>
</evidence>
<evidence type="ECO:0000269" key="15">
    <source>
    </source>
</evidence>
<evidence type="ECO:0000269" key="16">
    <source>
    </source>
</evidence>
<evidence type="ECO:0000269" key="17">
    <source>
    </source>
</evidence>
<evidence type="ECO:0000269" key="18">
    <source>
    </source>
</evidence>
<evidence type="ECO:0000269" key="19">
    <source>
    </source>
</evidence>
<evidence type="ECO:0000269" key="20">
    <source>
    </source>
</evidence>
<evidence type="ECO:0000269" key="21">
    <source ref="6"/>
</evidence>
<evidence type="ECO:0000305" key="22"/>
<evidence type="ECO:0007744" key="23">
    <source>
        <dbReference type="PDB" id="3JCR"/>
    </source>
</evidence>
<evidence type="ECO:0007744" key="24">
    <source>
        <dbReference type="PDB" id="4PJO"/>
    </source>
</evidence>
<evidence type="ECO:0007744" key="25">
    <source>
        <dbReference type="PDB" id="5MQF"/>
    </source>
</evidence>
<evidence type="ECO:0007744" key="26">
    <source>
        <dbReference type="PDB" id="5O9Z"/>
    </source>
</evidence>
<evidence type="ECO:0007744" key="27">
    <source>
        <dbReference type="PDB" id="5XJC"/>
    </source>
</evidence>
<evidence type="ECO:0007744" key="28">
    <source>
        <dbReference type="PDB" id="5XJL"/>
    </source>
</evidence>
<evidence type="ECO:0007744" key="29">
    <source>
        <dbReference type="PDB" id="5XJQ"/>
    </source>
</evidence>
<evidence type="ECO:0007744" key="30">
    <source>
        <dbReference type="PDB" id="5XJR"/>
    </source>
</evidence>
<evidence type="ECO:0007744" key="31">
    <source>
        <dbReference type="PDB" id="5XJS"/>
    </source>
</evidence>
<evidence type="ECO:0007744" key="32">
    <source>
        <dbReference type="PDB" id="6Y5Q"/>
    </source>
</evidence>
<evidence type="ECO:0007744" key="33">
    <source>
        <dbReference type="PDB" id="7DVQ"/>
    </source>
</evidence>
<evidence type="ECO:0007744" key="34">
    <source>
        <dbReference type="PDB" id="8HK1"/>
    </source>
</evidence>
<evidence type="ECO:0007829" key="35">
    <source>
        <dbReference type="PDB" id="5XJL"/>
    </source>
</evidence>
<organism>
    <name type="scientific">Homo sapiens</name>
    <name type="common">Human</name>
    <dbReference type="NCBI Taxonomy" id="9606"/>
    <lineage>
        <taxon>Eukaryota</taxon>
        <taxon>Metazoa</taxon>
        <taxon>Chordata</taxon>
        <taxon>Craniata</taxon>
        <taxon>Vertebrata</taxon>
        <taxon>Euteleostomi</taxon>
        <taxon>Mammalia</taxon>
        <taxon>Eutheria</taxon>
        <taxon>Euarchontoglires</taxon>
        <taxon>Primates</taxon>
        <taxon>Haplorrhini</taxon>
        <taxon>Catarrhini</taxon>
        <taxon>Hominidae</taxon>
        <taxon>Homo</taxon>
    </lineage>
</organism>
<dbReference type="EMBL" id="X85372">
    <property type="protein sequence ID" value="CAA59688.1"/>
    <property type="molecule type" value="mRNA"/>
</dbReference>
<dbReference type="EMBL" id="CR456751">
    <property type="protein sequence ID" value="CAG33032.1"/>
    <property type="molecule type" value="mRNA"/>
</dbReference>
<dbReference type="EMBL" id="AK311752">
    <property type="protein sequence ID" value="BAG34695.1"/>
    <property type="molecule type" value="mRNA"/>
</dbReference>
<dbReference type="EMBL" id="CH471054">
    <property type="protein sequence ID" value="EAW97548.1"/>
    <property type="molecule type" value="Genomic_DNA"/>
</dbReference>
<dbReference type="EMBL" id="BC002505">
    <property type="protein sequence ID" value="AAH02505.3"/>
    <property type="molecule type" value="mRNA"/>
</dbReference>
<dbReference type="EMBL" id="BC063397">
    <property type="protein sequence ID" value="AAH63397.2"/>
    <property type="molecule type" value="mRNA"/>
</dbReference>
<dbReference type="EMBL" id="BC128452">
    <property type="protein sequence ID" value="AAI28453.1"/>
    <property type="molecule type" value="mRNA"/>
</dbReference>
<dbReference type="EMBL" id="BC128453">
    <property type="protein sequence ID" value="AAI28454.1"/>
    <property type="molecule type" value="mRNA"/>
</dbReference>
<dbReference type="CCDS" id="CCDS9055.1"/>
<dbReference type="PIR" id="S55053">
    <property type="entry name" value="S55053"/>
</dbReference>
<dbReference type="RefSeq" id="NP_003086.1">
    <property type="nucleotide sequence ID" value="NM_003095.5"/>
</dbReference>
<dbReference type="PDB" id="3CW1">
    <property type="method" value="X-ray"/>
    <property type="resolution" value="5.49 A"/>
    <property type="chains" value="1/2/F/Z=1-86"/>
</dbReference>
<dbReference type="PDB" id="3JCR">
    <property type="method" value="EM"/>
    <property type="resolution" value="7.00 A"/>
    <property type="chains" value="T/t=1-86"/>
</dbReference>
<dbReference type="PDB" id="3PGW">
    <property type="method" value="X-ray"/>
    <property type="resolution" value="4.40 A"/>
    <property type="chains" value="F/I=1-86"/>
</dbReference>
<dbReference type="PDB" id="4F7U">
    <property type="method" value="X-ray"/>
    <property type="resolution" value="1.90 A"/>
    <property type="chains" value="F/I=1-86"/>
</dbReference>
<dbReference type="PDB" id="4PJO">
    <property type="method" value="X-ray"/>
    <property type="resolution" value="3.30 A"/>
    <property type="chains" value="F/T/f/t=1-75"/>
</dbReference>
<dbReference type="PDB" id="4V98">
    <property type="method" value="X-ray"/>
    <property type="resolution" value="3.10 A"/>
    <property type="chains" value="AD/AL/AT/Ab/Aj/Ar/Az/BD/BL/BT/Bb/Bj/Br/Bz/CD/CL/CT/Cb/Cj/Cr=1-86"/>
</dbReference>
<dbReference type="PDB" id="4WZJ">
    <property type="method" value="X-ray"/>
    <property type="resolution" value="3.60 A"/>
    <property type="chains" value="AF/AM/AT/BF/BM/BT/CF/CM/CT/DF/DM/DT=1-86"/>
</dbReference>
<dbReference type="PDB" id="5MQF">
    <property type="method" value="EM"/>
    <property type="resolution" value="5.90 A"/>
    <property type="chains" value="b/i=1-86"/>
</dbReference>
<dbReference type="PDB" id="5O9Z">
    <property type="method" value="EM"/>
    <property type="resolution" value="4.50 A"/>
    <property type="chains" value="T/b/i=1-86"/>
</dbReference>
<dbReference type="PDB" id="5XJC">
    <property type="method" value="EM"/>
    <property type="resolution" value="3.60 A"/>
    <property type="chains" value="f/m=1-86"/>
</dbReference>
<dbReference type="PDB" id="5XJL">
    <property type="method" value="X-ray"/>
    <property type="resolution" value="2.50 A"/>
    <property type="chains" value="F=1-86"/>
</dbReference>
<dbReference type="PDB" id="5XJQ">
    <property type="method" value="X-ray"/>
    <property type="resolution" value="3.28 A"/>
    <property type="chains" value="F=1-86"/>
</dbReference>
<dbReference type="PDB" id="5XJR">
    <property type="method" value="X-ray"/>
    <property type="resolution" value="3.12 A"/>
    <property type="chains" value="F=1-86"/>
</dbReference>
<dbReference type="PDB" id="5XJS">
    <property type="method" value="X-ray"/>
    <property type="resolution" value="3.38 A"/>
    <property type="chains" value="F=1-86"/>
</dbReference>
<dbReference type="PDB" id="5XJT">
    <property type="method" value="X-ray"/>
    <property type="resolution" value="2.92 A"/>
    <property type="chains" value="F=1-86"/>
</dbReference>
<dbReference type="PDB" id="5XJU">
    <property type="method" value="X-ray"/>
    <property type="resolution" value="2.58 A"/>
    <property type="chains" value="F=1-86"/>
</dbReference>
<dbReference type="PDB" id="5YZG">
    <property type="method" value="EM"/>
    <property type="resolution" value="4.10 A"/>
    <property type="chains" value="f/m=1-86"/>
</dbReference>
<dbReference type="PDB" id="5Z56">
    <property type="method" value="EM"/>
    <property type="resolution" value="5.10 A"/>
    <property type="chains" value="f/m=1-86"/>
</dbReference>
<dbReference type="PDB" id="5Z57">
    <property type="method" value="EM"/>
    <property type="resolution" value="6.50 A"/>
    <property type="chains" value="f/m=1-86"/>
</dbReference>
<dbReference type="PDB" id="5Z58">
    <property type="method" value="EM"/>
    <property type="resolution" value="4.90 A"/>
    <property type="chains" value="f/m=1-86"/>
</dbReference>
<dbReference type="PDB" id="6AH0">
    <property type="method" value="EM"/>
    <property type="resolution" value="5.70 A"/>
    <property type="chains" value="Q/b/m=1-86"/>
</dbReference>
<dbReference type="PDB" id="6FF7">
    <property type="method" value="EM"/>
    <property type="resolution" value="4.50 A"/>
    <property type="chains" value="b/i=1-86"/>
</dbReference>
<dbReference type="PDB" id="6ICZ">
    <property type="method" value="EM"/>
    <property type="resolution" value="3.00 A"/>
    <property type="chains" value="f/m=1-86"/>
</dbReference>
<dbReference type="PDB" id="6ID0">
    <property type="method" value="EM"/>
    <property type="resolution" value="2.90 A"/>
    <property type="chains" value="f/m=1-86"/>
</dbReference>
<dbReference type="PDB" id="6ID1">
    <property type="method" value="EM"/>
    <property type="resolution" value="2.86 A"/>
    <property type="chains" value="f/m=1-86"/>
</dbReference>
<dbReference type="PDB" id="6QDV">
    <property type="method" value="EM"/>
    <property type="resolution" value="3.30 A"/>
    <property type="chains" value="f/q=4-75"/>
</dbReference>
<dbReference type="PDB" id="6QW6">
    <property type="method" value="EM"/>
    <property type="resolution" value="2.92 A"/>
    <property type="chains" value="4f/5f=1-86"/>
</dbReference>
<dbReference type="PDB" id="6QX9">
    <property type="method" value="EM"/>
    <property type="resolution" value="3.28 A"/>
    <property type="chains" value="1f/2f/4f/5f=1-86"/>
</dbReference>
<dbReference type="PDB" id="6V4X">
    <property type="method" value="EM"/>
    <property type="resolution" value="3.20 A"/>
    <property type="chains" value="F=1-86"/>
</dbReference>
<dbReference type="PDB" id="6Y53">
    <property type="method" value="EM"/>
    <property type="resolution" value="7.10 A"/>
    <property type="chains" value="i=1-86"/>
</dbReference>
<dbReference type="PDB" id="6Y5Q">
    <property type="method" value="EM"/>
    <property type="resolution" value="7.10 A"/>
    <property type="chains" value="i=1-86"/>
</dbReference>
<dbReference type="PDB" id="7A5P">
    <property type="method" value="EM"/>
    <property type="resolution" value="5.00 A"/>
    <property type="chains" value="f/i=1-86"/>
</dbReference>
<dbReference type="PDB" id="7ABG">
    <property type="method" value="EM"/>
    <property type="resolution" value="7.80 A"/>
    <property type="chains" value="b/i=1-86"/>
</dbReference>
<dbReference type="PDB" id="7ABI">
    <property type="method" value="EM"/>
    <property type="resolution" value="8.00 A"/>
    <property type="chains" value="b/i=1-86"/>
</dbReference>
<dbReference type="PDB" id="7B0Y">
    <property type="method" value="EM"/>
    <property type="resolution" value="3.60 A"/>
    <property type="chains" value="f=1-86"/>
</dbReference>
<dbReference type="PDB" id="7DVQ">
    <property type="method" value="EM"/>
    <property type="resolution" value="2.89 A"/>
    <property type="chains" value="f/m=1-86"/>
</dbReference>
<dbReference type="PDB" id="7EVO">
    <property type="method" value="EM"/>
    <property type="resolution" value="2.50 A"/>
    <property type="chains" value="b=1-86"/>
</dbReference>
<dbReference type="PDB" id="7QTT">
    <property type="method" value="EM"/>
    <property type="resolution" value="3.10 A"/>
    <property type="chains" value="h=1-86"/>
</dbReference>
<dbReference type="PDB" id="7VPX">
    <property type="method" value="EM"/>
    <property type="resolution" value="3.00 A"/>
    <property type="chains" value="b/m=1-86"/>
</dbReference>
<dbReference type="PDB" id="7W59">
    <property type="method" value="EM"/>
    <property type="resolution" value="3.60 A"/>
    <property type="chains" value="f/m=1-86"/>
</dbReference>
<dbReference type="PDB" id="7W5A">
    <property type="method" value="EM"/>
    <property type="resolution" value="3.60 A"/>
    <property type="chains" value="f/m=1-86"/>
</dbReference>
<dbReference type="PDB" id="7W5B">
    <property type="method" value="EM"/>
    <property type="resolution" value="4.30 A"/>
    <property type="chains" value="f/m=1-86"/>
</dbReference>
<dbReference type="PDB" id="8C6J">
    <property type="method" value="EM"/>
    <property type="resolution" value="2.80 A"/>
    <property type="chains" value="f/q=1-86"/>
</dbReference>
<dbReference type="PDB" id="8CH6">
    <property type="method" value="EM"/>
    <property type="resolution" value="5.90 A"/>
    <property type="chains" value="2/h=1-86"/>
</dbReference>
<dbReference type="PDB" id="8H6E">
    <property type="method" value="EM"/>
    <property type="resolution" value="3.20 A"/>
    <property type="chains" value="2d/4d/5d=1-86"/>
</dbReference>
<dbReference type="PDB" id="8H6J">
    <property type="method" value="EM"/>
    <property type="resolution" value="3.25 A"/>
    <property type="chains" value="2d/4d/5d=1-86"/>
</dbReference>
<dbReference type="PDB" id="8H6K">
    <property type="method" value="EM"/>
    <property type="resolution" value="2.70 A"/>
    <property type="chains" value="2d/4d/5d=1-86"/>
</dbReference>
<dbReference type="PDB" id="8H6L">
    <property type="method" value="EM"/>
    <property type="resolution" value="2.60 A"/>
    <property type="chains" value="2d/4d/5d=1-86"/>
</dbReference>
<dbReference type="PDB" id="8HK1">
    <property type="method" value="EM"/>
    <property type="resolution" value="2.70 A"/>
    <property type="chains" value="b=1-86"/>
</dbReference>
<dbReference type="PDB" id="8I0P">
    <property type="method" value="EM"/>
    <property type="resolution" value="3.40 A"/>
    <property type="chains" value="d/i=1-86"/>
</dbReference>
<dbReference type="PDB" id="8I0R">
    <property type="method" value="EM"/>
    <property type="resolution" value="3.00 A"/>
    <property type="chains" value="d/i=1-86"/>
</dbReference>
<dbReference type="PDB" id="8I0S">
    <property type="method" value="EM"/>
    <property type="resolution" value="4.20 A"/>
    <property type="chains" value="d/i=1-86"/>
</dbReference>
<dbReference type="PDB" id="8I0T">
    <property type="method" value="EM"/>
    <property type="resolution" value="3.00 A"/>
    <property type="chains" value="d/i=1-86"/>
</dbReference>
<dbReference type="PDB" id="8I0U">
    <property type="method" value="EM"/>
    <property type="resolution" value="3.30 A"/>
    <property type="chains" value="d/i=1-86"/>
</dbReference>
<dbReference type="PDB" id="8I0V">
    <property type="method" value="EM"/>
    <property type="resolution" value="3.00 A"/>
    <property type="chains" value="d/i=1-86"/>
</dbReference>
<dbReference type="PDB" id="8I0W">
    <property type="method" value="EM"/>
    <property type="resolution" value="3.40 A"/>
    <property type="chains" value="d/m=1-86"/>
</dbReference>
<dbReference type="PDB" id="8Q7Q">
    <property type="method" value="EM"/>
    <property type="resolution" value="3.20 A"/>
    <property type="chains" value="f=1-86"/>
</dbReference>
<dbReference type="PDB" id="8Q7V">
    <property type="method" value="EM"/>
    <property type="resolution" value="3.80 A"/>
    <property type="chains" value="f=1-86"/>
</dbReference>
<dbReference type="PDB" id="8Q7W">
    <property type="method" value="EM"/>
    <property type="resolution" value="3.90 A"/>
    <property type="chains" value="f=1-86"/>
</dbReference>
<dbReference type="PDB" id="8Q7X">
    <property type="method" value="EM"/>
    <property type="resolution" value="4.60 A"/>
    <property type="chains" value="f=1-86"/>
</dbReference>
<dbReference type="PDB" id="8Q91">
    <property type="method" value="EM"/>
    <property type="resolution" value="3.10 A"/>
    <property type="chains" value="m=1-86"/>
</dbReference>
<dbReference type="PDB" id="8QO9">
    <property type="method" value="EM"/>
    <property type="resolution" value="5.29 A"/>
    <property type="chains" value="2f/4f/5f=1-86"/>
</dbReference>
<dbReference type="PDB" id="8QXD">
    <property type="method" value="EM"/>
    <property type="resolution" value="9.60 A"/>
    <property type="chains" value="2f/4f/5f=1-86"/>
</dbReference>
<dbReference type="PDB" id="8QZS">
    <property type="method" value="EM"/>
    <property type="resolution" value="4.10 A"/>
    <property type="chains" value="2f/4f/5f=1-86"/>
</dbReference>
<dbReference type="PDB" id="8R08">
    <property type="method" value="EM"/>
    <property type="resolution" value="6.10 A"/>
    <property type="chains" value="1f/2f/4f/5f=1-86"/>
</dbReference>
<dbReference type="PDB" id="8R09">
    <property type="method" value="EM"/>
    <property type="resolution" value="4.30 A"/>
    <property type="chains" value="2f/4f/5f=1-86"/>
</dbReference>
<dbReference type="PDB" id="8R0A">
    <property type="method" value="EM"/>
    <property type="resolution" value="5.80 A"/>
    <property type="chains" value="2f/4f/5f=1-86"/>
</dbReference>
<dbReference type="PDB" id="8R0B">
    <property type="method" value="EM"/>
    <property type="resolution" value="4.40 A"/>
    <property type="chains" value="2f/4f/5f=1-86"/>
</dbReference>
<dbReference type="PDB" id="8R7N">
    <property type="method" value="EM"/>
    <property type="resolution" value="3.40 A"/>
    <property type="chains" value="m=1-86"/>
</dbReference>
<dbReference type="PDB" id="8RC0">
    <property type="method" value="EM"/>
    <property type="resolution" value="3.20 A"/>
    <property type="chains" value="m=1-86"/>
</dbReference>
<dbReference type="PDB" id="8RM5">
    <property type="method" value="EM"/>
    <property type="resolution" value="6.90 A"/>
    <property type="chains" value="2f/4f/5f=1-86"/>
</dbReference>
<dbReference type="PDB" id="8RO2">
    <property type="method" value="EM"/>
    <property type="resolution" value="3.50 A"/>
    <property type="chains" value="f=1-86"/>
</dbReference>
<dbReference type="PDB" id="8Y6O">
    <property type="method" value="EM"/>
    <property type="resolution" value="3.38 A"/>
    <property type="chains" value="f/m/t=1-86"/>
</dbReference>
<dbReference type="PDB" id="8Y7E">
    <property type="method" value="EM"/>
    <property type="resolution" value="4.66 A"/>
    <property type="chains" value="m=1-86"/>
</dbReference>
<dbReference type="PDB" id="9FMD">
    <property type="method" value="EM"/>
    <property type="resolution" value="3.30 A"/>
    <property type="chains" value="f/m=1-86"/>
</dbReference>
<dbReference type="PDB" id="9GBW">
    <property type="method" value="EM"/>
    <property type="resolution" value="3.50 A"/>
    <property type="chains" value="m=1-86"/>
</dbReference>
<dbReference type="PDB" id="9GC0">
    <property type="method" value="EM"/>
    <property type="resolution" value="3.20 A"/>
    <property type="chains" value="m=1-86"/>
</dbReference>
<dbReference type="PDB" id="9GCL">
    <property type="method" value="EM"/>
    <property type="resolution" value="3.00 A"/>
    <property type="chains" value="m=1-86"/>
</dbReference>
<dbReference type="PDBsum" id="3CW1"/>
<dbReference type="PDBsum" id="3JCR"/>
<dbReference type="PDBsum" id="3PGW"/>
<dbReference type="PDBsum" id="4F7U"/>
<dbReference type="PDBsum" id="4PJO"/>
<dbReference type="PDBsum" id="4V98"/>
<dbReference type="PDBsum" id="4WZJ"/>
<dbReference type="PDBsum" id="5MQF"/>
<dbReference type="PDBsum" id="5O9Z"/>
<dbReference type="PDBsum" id="5XJC"/>
<dbReference type="PDBsum" id="5XJL"/>
<dbReference type="PDBsum" id="5XJQ"/>
<dbReference type="PDBsum" id="5XJR"/>
<dbReference type="PDBsum" id="5XJS"/>
<dbReference type="PDBsum" id="5XJT"/>
<dbReference type="PDBsum" id="5XJU"/>
<dbReference type="PDBsum" id="5YZG"/>
<dbReference type="PDBsum" id="5Z56"/>
<dbReference type="PDBsum" id="5Z57"/>
<dbReference type="PDBsum" id="5Z58"/>
<dbReference type="PDBsum" id="6AH0"/>
<dbReference type="PDBsum" id="6FF7"/>
<dbReference type="PDBsum" id="6ICZ"/>
<dbReference type="PDBsum" id="6ID0"/>
<dbReference type="PDBsum" id="6ID1"/>
<dbReference type="PDBsum" id="6QDV"/>
<dbReference type="PDBsum" id="6QW6"/>
<dbReference type="PDBsum" id="6QX9"/>
<dbReference type="PDBsum" id="6V4X"/>
<dbReference type="PDBsum" id="6Y53"/>
<dbReference type="PDBsum" id="6Y5Q"/>
<dbReference type="PDBsum" id="7A5P"/>
<dbReference type="PDBsum" id="7ABG"/>
<dbReference type="PDBsum" id="7ABI"/>
<dbReference type="PDBsum" id="7B0Y"/>
<dbReference type="PDBsum" id="7DVQ"/>
<dbReference type="PDBsum" id="7EVO"/>
<dbReference type="PDBsum" id="7QTT"/>
<dbReference type="PDBsum" id="7VPX"/>
<dbReference type="PDBsum" id="7W59"/>
<dbReference type="PDBsum" id="7W5A"/>
<dbReference type="PDBsum" id="7W5B"/>
<dbReference type="PDBsum" id="8C6J"/>
<dbReference type="PDBsum" id="8CH6"/>
<dbReference type="PDBsum" id="8H6E"/>
<dbReference type="PDBsum" id="8H6J"/>
<dbReference type="PDBsum" id="8H6K"/>
<dbReference type="PDBsum" id="8H6L"/>
<dbReference type="PDBsum" id="8HK1"/>
<dbReference type="PDBsum" id="8I0P"/>
<dbReference type="PDBsum" id="8I0R"/>
<dbReference type="PDBsum" id="8I0S"/>
<dbReference type="PDBsum" id="8I0T"/>
<dbReference type="PDBsum" id="8I0U"/>
<dbReference type="PDBsum" id="8I0V"/>
<dbReference type="PDBsum" id="8I0W"/>
<dbReference type="PDBsum" id="8Q7Q"/>
<dbReference type="PDBsum" id="8Q7V"/>
<dbReference type="PDBsum" id="8Q7W"/>
<dbReference type="PDBsum" id="8Q7X"/>
<dbReference type="PDBsum" id="8Q91"/>
<dbReference type="PDBsum" id="8QO9"/>
<dbReference type="PDBsum" id="8QXD"/>
<dbReference type="PDBsum" id="8QZS"/>
<dbReference type="PDBsum" id="8R08"/>
<dbReference type="PDBsum" id="8R09"/>
<dbReference type="PDBsum" id="8R0A"/>
<dbReference type="PDBsum" id="8R0B"/>
<dbReference type="PDBsum" id="8R7N"/>
<dbReference type="PDBsum" id="8RC0"/>
<dbReference type="PDBsum" id="8RM5"/>
<dbReference type="PDBsum" id="8RO2"/>
<dbReference type="PDBsum" id="8Y6O"/>
<dbReference type="PDBsum" id="8Y7E"/>
<dbReference type="PDBsum" id="9FMD"/>
<dbReference type="PDBsum" id="9GBW"/>
<dbReference type="PDBsum" id="9GC0"/>
<dbReference type="PDBsum" id="9GCL"/>
<dbReference type="EMDB" id="EMD-10689"/>
<dbReference type="EMDB" id="EMD-11695"/>
<dbReference type="EMDB" id="EMD-11697"/>
<dbReference type="EMDB" id="EMD-11972"/>
<dbReference type="EMDB" id="EMD-14146"/>
<dbReference type="EMDB" id="EMD-16452"/>
<dbReference type="EMDB" id="EMD-16658"/>
<dbReference type="EMDB" id="EMD-18229"/>
<dbReference type="EMDB" id="EMD-18234"/>
<dbReference type="EMDB" id="EMD-18235"/>
<dbReference type="EMDB" id="EMD-18237"/>
<dbReference type="EMDB" id="EMD-18267"/>
<dbReference type="EMDB" id="EMD-18529"/>
<dbReference type="EMDB" id="EMD-18718"/>
<dbReference type="EMDB" id="EMD-18781"/>
<dbReference type="EMDB" id="EMD-18786"/>
<dbReference type="EMDB" id="EMD-18787"/>
<dbReference type="EMDB" id="EMD-18788"/>
<dbReference type="EMDB" id="EMD-18789"/>
<dbReference type="EMDB" id="EMD-18984"/>
<dbReference type="EMDB" id="EMD-19041"/>
<dbReference type="EMDB" id="EMD-19349"/>
<dbReference type="EMDB" id="EMD-19399"/>
<dbReference type="EMDB" id="EMD-21050"/>
<dbReference type="EMDB" id="EMD-30875"/>
<dbReference type="EMDB" id="EMD-31334"/>
<dbReference type="EMDB" id="EMD-32074"/>
<dbReference type="EMDB" id="EMD-32317"/>
<dbReference type="EMDB" id="EMD-32319"/>
<dbReference type="EMDB" id="EMD-32321"/>
<dbReference type="EMDB" id="EMD-34500"/>
<dbReference type="EMDB" id="EMD-34505"/>
<dbReference type="EMDB" id="EMD-34507"/>
<dbReference type="EMDB" id="EMD-34508"/>
<dbReference type="EMDB" id="EMD-34841"/>
<dbReference type="EMDB" id="EMD-35105"/>
<dbReference type="EMDB" id="EMD-35107"/>
<dbReference type="EMDB" id="EMD-35108"/>
<dbReference type="EMDB" id="EMD-35109"/>
<dbReference type="EMDB" id="EMD-35110"/>
<dbReference type="EMDB" id="EMD-35111"/>
<dbReference type="EMDB" id="EMD-35113"/>
<dbReference type="EMDB" id="EMD-3545"/>
<dbReference type="EMDB" id="EMD-3766"/>
<dbReference type="EMDB" id="EMD-38993"/>
<dbReference type="EMDB" id="EMD-39013"/>
<dbReference type="EMDB" id="EMD-4525"/>
<dbReference type="EMDB" id="EMD-4658"/>
<dbReference type="EMDB" id="EMD-4665"/>
<dbReference type="EMDB" id="EMD-51223"/>
<dbReference type="EMDB" id="EMD-51226"/>
<dbReference type="EMDB" id="EMD-51233"/>
<dbReference type="EMDB" id="EMD-6721"/>
<dbReference type="EMDB" id="EMD-6864"/>
<dbReference type="EMDB" id="EMD-6889"/>
<dbReference type="EMDB" id="EMD-6890"/>
<dbReference type="EMDB" id="EMD-6891"/>
<dbReference type="EMDB" id="EMD-9621"/>
<dbReference type="EMDB" id="EMD-9624"/>
<dbReference type="EMDB" id="EMD-9645"/>
<dbReference type="EMDB" id="EMD-9646"/>
<dbReference type="EMDB" id="EMD-9647"/>
<dbReference type="SMR" id="P62306"/>
<dbReference type="BioGRID" id="112520">
    <property type="interactions" value="386"/>
</dbReference>
<dbReference type="ComplexPortal" id="CPX-2391">
    <property type="entry name" value="U4/U6.U5 small nuclear ribonucleoprotein complex"/>
</dbReference>
<dbReference type="ComplexPortal" id="CPX-2392">
    <property type="entry name" value="U1 small nuclear ribonucleoprotein complex"/>
</dbReference>
<dbReference type="ComplexPortal" id="CPX-2539">
    <property type="entry name" value="U2 small nuclear ribonucleoprotein complex"/>
</dbReference>
<dbReference type="ComplexPortal" id="CPX-2705">
    <property type="entry name" value="U7 small nuclear ribonucleoprotein complex"/>
</dbReference>
<dbReference type="ComplexPortal" id="CPX-6033">
    <property type="entry name" value="Sm complex"/>
</dbReference>
<dbReference type="CORUM" id="P62306"/>
<dbReference type="DIP" id="DIP-31221N"/>
<dbReference type="FunCoup" id="P62306">
    <property type="interactions" value="2197"/>
</dbReference>
<dbReference type="IntAct" id="P62306">
    <property type="interactions" value="285"/>
</dbReference>
<dbReference type="MINT" id="P62306"/>
<dbReference type="STRING" id="9606.ENSP00000266735"/>
<dbReference type="GlyGen" id="P62306">
    <property type="glycosylation" value="1 site, 1 O-linked glycan (1 site)"/>
</dbReference>
<dbReference type="iPTMnet" id="P62306"/>
<dbReference type="PhosphoSitePlus" id="P62306"/>
<dbReference type="SwissPalm" id="P62306"/>
<dbReference type="BioMuta" id="SNRPF"/>
<dbReference type="DMDM" id="61237391"/>
<dbReference type="jPOST" id="P62306"/>
<dbReference type="MassIVE" id="P62306"/>
<dbReference type="PaxDb" id="9606-ENSP00000266735"/>
<dbReference type="PeptideAtlas" id="P62306"/>
<dbReference type="ProteomicsDB" id="57387"/>
<dbReference type="Pumba" id="P62306"/>
<dbReference type="TopDownProteomics" id="P62306"/>
<dbReference type="Antibodypedia" id="17610">
    <property type="antibodies" value="109 antibodies from 24 providers"/>
</dbReference>
<dbReference type="DNASU" id="6636"/>
<dbReference type="Ensembl" id="ENST00000266735.10">
    <property type="protein sequence ID" value="ENSP00000266735.5"/>
    <property type="gene ID" value="ENSG00000139343.11"/>
</dbReference>
<dbReference type="GeneID" id="6636"/>
<dbReference type="KEGG" id="hsa:6636"/>
<dbReference type="MANE-Select" id="ENST00000266735.10">
    <property type="protein sequence ID" value="ENSP00000266735.5"/>
    <property type="RefSeq nucleotide sequence ID" value="NM_003095.5"/>
    <property type="RefSeq protein sequence ID" value="NP_003086.1"/>
</dbReference>
<dbReference type="UCSC" id="uc001tej.5">
    <property type="organism name" value="human"/>
</dbReference>
<dbReference type="AGR" id="HGNC:11162"/>
<dbReference type="CTD" id="6636"/>
<dbReference type="DisGeNET" id="6636"/>
<dbReference type="GeneCards" id="SNRPF"/>
<dbReference type="HGNC" id="HGNC:11162">
    <property type="gene designation" value="SNRPF"/>
</dbReference>
<dbReference type="HPA" id="ENSG00000139343">
    <property type="expression patterns" value="Low tissue specificity"/>
</dbReference>
<dbReference type="MIM" id="603541">
    <property type="type" value="gene"/>
</dbReference>
<dbReference type="neXtProt" id="NX_P62306"/>
<dbReference type="OpenTargets" id="ENSG00000139343"/>
<dbReference type="PharmGKB" id="PA36003"/>
<dbReference type="VEuPathDB" id="HostDB:ENSG00000139343"/>
<dbReference type="eggNOG" id="KOG3482">
    <property type="taxonomic scope" value="Eukaryota"/>
</dbReference>
<dbReference type="GeneTree" id="ENSGT00940000154818"/>
<dbReference type="HOGENOM" id="CLU_076902_12_1_1"/>
<dbReference type="InParanoid" id="P62306"/>
<dbReference type="OMA" id="GYMNVQL"/>
<dbReference type="OrthoDB" id="9582814at2759"/>
<dbReference type="PAN-GO" id="P62306">
    <property type="GO annotations" value="4 GO annotations based on evolutionary models"/>
</dbReference>
<dbReference type="PhylomeDB" id="P62306"/>
<dbReference type="TreeFam" id="TF314481"/>
<dbReference type="PathwayCommons" id="P62306"/>
<dbReference type="Reactome" id="R-HSA-111367">
    <property type="pathway name" value="SLBP independent Processing of Histone Pre-mRNAs"/>
</dbReference>
<dbReference type="Reactome" id="R-HSA-191859">
    <property type="pathway name" value="snRNP Assembly"/>
</dbReference>
<dbReference type="Reactome" id="R-HSA-72163">
    <property type="pathway name" value="mRNA Splicing - Major Pathway"/>
</dbReference>
<dbReference type="Reactome" id="R-HSA-72165">
    <property type="pathway name" value="mRNA Splicing - Minor Pathway"/>
</dbReference>
<dbReference type="Reactome" id="R-HSA-73856">
    <property type="pathway name" value="RNA Polymerase II Transcription Termination"/>
</dbReference>
<dbReference type="Reactome" id="R-HSA-77588">
    <property type="pathway name" value="SLBP Dependent Processing of Replication-Dependent Histone Pre-mRNAs"/>
</dbReference>
<dbReference type="Reactome" id="R-HSA-9754678">
    <property type="pathway name" value="SARS-CoV-2 modulates host translation machinery"/>
</dbReference>
<dbReference type="SignaLink" id="P62306"/>
<dbReference type="SIGNOR" id="P62306"/>
<dbReference type="BioGRID-ORCS" id="6636">
    <property type="hits" value="841 hits in 1127 CRISPR screens"/>
</dbReference>
<dbReference type="CD-CODE" id="DEE660B4">
    <property type="entry name" value="Stress granule"/>
</dbReference>
<dbReference type="ChiTaRS" id="SNRPF">
    <property type="organism name" value="human"/>
</dbReference>
<dbReference type="EvolutionaryTrace" id="P62306"/>
<dbReference type="GeneWiki" id="Small_nuclear_ribonucleoprotein_polypeptide_F"/>
<dbReference type="GenomeRNAi" id="6636"/>
<dbReference type="Pharos" id="P62306">
    <property type="development level" value="Tbio"/>
</dbReference>
<dbReference type="PRO" id="PR:P62306"/>
<dbReference type="Proteomes" id="UP000005640">
    <property type="component" value="Chromosome 12"/>
</dbReference>
<dbReference type="RNAct" id="P62306">
    <property type="molecule type" value="protein"/>
</dbReference>
<dbReference type="Bgee" id="ENSG00000139343">
    <property type="expression patterns" value="Expressed in endometrium epithelium and 202 other cell types or tissues"/>
</dbReference>
<dbReference type="ExpressionAtlas" id="P62306">
    <property type="expression patterns" value="baseline and differential"/>
</dbReference>
<dbReference type="GO" id="GO:0071013">
    <property type="term" value="C:catalytic step 2 spliceosome"/>
    <property type="evidence" value="ECO:0000314"/>
    <property type="project" value="UniProtKB"/>
</dbReference>
<dbReference type="GO" id="GO:0005829">
    <property type="term" value="C:cytosol"/>
    <property type="evidence" value="ECO:0000314"/>
    <property type="project" value="UniProtKB"/>
</dbReference>
<dbReference type="GO" id="GO:0034709">
    <property type="term" value="C:methylosome"/>
    <property type="evidence" value="ECO:0000314"/>
    <property type="project" value="UniProtKB"/>
</dbReference>
<dbReference type="GO" id="GO:0005654">
    <property type="term" value="C:nucleoplasm"/>
    <property type="evidence" value="ECO:0000304"/>
    <property type="project" value="Reactome"/>
</dbReference>
<dbReference type="GO" id="GO:0005634">
    <property type="term" value="C:nucleus"/>
    <property type="evidence" value="ECO:0000314"/>
    <property type="project" value="UniProtKB"/>
</dbReference>
<dbReference type="GO" id="GO:0034715">
    <property type="term" value="C:pICln-Sm protein complex"/>
    <property type="evidence" value="ECO:0000314"/>
    <property type="project" value="UniProtKB"/>
</dbReference>
<dbReference type="GO" id="GO:0030532">
    <property type="term" value="C:small nuclear ribonucleoprotein complex"/>
    <property type="evidence" value="ECO:0000314"/>
    <property type="project" value="UniProtKB"/>
</dbReference>
<dbReference type="GO" id="GO:0034719">
    <property type="term" value="C:SMN-Sm protein complex"/>
    <property type="evidence" value="ECO:0000314"/>
    <property type="project" value="UniProtKB"/>
</dbReference>
<dbReference type="GO" id="GO:0005681">
    <property type="term" value="C:spliceosomal complex"/>
    <property type="evidence" value="ECO:0000314"/>
    <property type="project" value="UniProtKB"/>
</dbReference>
<dbReference type="GO" id="GO:0005685">
    <property type="term" value="C:U1 snRNP"/>
    <property type="evidence" value="ECO:0000314"/>
    <property type="project" value="UniProtKB"/>
</dbReference>
<dbReference type="GO" id="GO:0005689">
    <property type="term" value="C:U12-type spliceosomal complex"/>
    <property type="evidence" value="ECO:0000314"/>
    <property type="project" value="UniProtKB"/>
</dbReference>
<dbReference type="GO" id="GO:0005686">
    <property type="term" value="C:U2 snRNP"/>
    <property type="evidence" value="ECO:0000303"/>
    <property type="project" value="ComplexPortal"/>
</dbReference>
<dbReference type="GO" id="GO:0071007">
    <property type="term" value="C:U2-type catalytic step 2 spliceosome"/>
    <property type="evidence" value="ECO:0000314"/>
    <property type="project" value="UniProtKB"/>
</dbReference>
<dbReference type="GO" id="GO:0071005">
    <property type="term" value="C:U2-type precatalytic spliceosome"/>
    <property type="evidence" value="ECO:0000314"/>
    <property type="project" value="UniProtKB"/>
</dbReference>
<dbReference type="GO" id="GO:0005684">
    <property type="term" value="C:U2-type spliceosomal complex"/>
    <property type="evidence" value="ECO:0000314"/>
    <property type="project" value="UniProtKB"/>
</dbReference>
<dbReference type="GO" id="GO:0005687">
    <property type="term" value="C:U4 snRNP"/>
    <property type="evidence" value="ECO:0000314"/>
    <property type="project" value="UniProtKB"/>
</dbReference>
<dbReference type="GO" id="GO:0046540">
    <property type="term" value="C:U4/U6 x U5 tri-snRNP complex"/>
    <property type="evidence" value="ECO:0000314"/>
    <property type="project" value="UniProtKB"/>
</dbReference>
<dbReference type="GO" id="GO:0005682">
    <property type="term" value="C:U5 snRNP"/>
    <property type="evidence" value="ECO:0000303"/>
    <property type="project" value="ComplexPortal"/>
</dbReference>
<dbReference type="GO" id="GO:0005683">
    <property type="term" value="C:U7 snRNP"/>
    <property type="evidence" value="ECO:0000314"/>
    <property type="project" value="UniProtKB"/>
</dbReference>
<dbReference type="GO" id="GO:0003723">
    <property type="term" value="F:RNA binding"/>
    <property type="evidence" value="ECO:0000315"/>
    <property type="project" value="UniProtKB"/>
</dbReference>
<dbReference type="GO" id="GO:0036261">
    <property type="term" value="P:7-methylguanosine cap hypermethylation"/>
    <property type="evidence" value="ECO:0000303"/>
    <property type="project" value="ComplexPortal"/>
</dbReference>
<dbReference type="GO" id="GO:0000398">
    <property type="term" value="P:mRNA splicing, via spliceosome"/>
    <property type="evidence" value="ECO:0000314"/>
    <property type="project" value="UniProtKB"/>
</dbReference>
<dbReference type="GO" id="GO:0008380">
    <property type="term" value="P:RNA splicing"/>
    <property type="evidence" value="ECO:0000315"/>
    <property type="project" value="UniProtKB"/>
</dbReference>
<dbReference type="GO" id="GO:0000387">
    <property type="term" value="P:spliceosomal snRNP assembly"/>
    <property type="evidence" value="ECO:0000314"/>
    <property type="project" value="UniProtKB"/>
</dbReference>
<dbReference type="GO" id="GO:1903241">
    <property type="term" value="P:U2-type prespliceosome assembly"/>
    <property type="evidence" value="ECO:0000303"/>
    <property type="project" value="ComplexPortal"/>
</dbReference>
<dbReference type="CDD" id="cd01722">
    <property type="entry name" value="Sm_F"/>
    <property type="match status" value="1"/>
</dbReference>
<dbReference type="FunFam" id="2.30.30.100:FF:000133">
    <property type="entry name" value="Small nuclear ribonucleoprotein F"/>
    <property type="match status" value="1"/>
</dbReference>
<dbReference type="Gene3D" id="2.30.30.100">
    <property type="match status" value="1"/>
</dbReference>
<dbReference type="IDEAL" id="IID00157"/>
<dbReference type="InterPro" id="IPR016487">
    <property type="entry name" value="Lsm6/sSmF"/>
</dbReference>
<dbReference type="InterPro" id="IPR010920">
    <property type="entry name" value="LSM_dom_sf"/>
</dbReference>
<dbReference type="InterPro" id="IPR047575">
    <property type="entry name" value="Sm"/>
</dbReference>
<dbReference type="InterPro" id="IPR001163">
    <property type="entry name" value="Sm_dom_euk/arc"/>
</dbReference>
<dbReference type="InterPro" id="IPR034100">
    <property type="entry name" value="Sm_F"/>
</dbReference>
<dbReference type="PANTHER" id="PTHR11021:SF0">
    <property type="entry name" value="SMALL NUCLEAR RIBONUCLEOPROTEIN F"/>
    <property type="match status" value="1"/>
</dbReference>
<dbReference type="PANTHER" id="PTHR11021">
    <property type="entry name" value="SMALL NUCLEAR RIBONUCLEOPROTEIN F SNRNP-F"/>
    <property type="match status" value="1"/>
</dbReference>
<dbReference type="Pfam" id="PF01423">
    <property type="entry name" value="LSM"/>
    <property type="match status" value="1"/>
</dbReference>
<dbReference type="PIRSF" id="PIRSF006609">
    <property type="entry name" value="snRNP_SmF"/>
    <property type="match status" value="1"/>
</dbReference>
<dbReference type="SMART" id="SM00651">
    <property type="entry name" value="Sm"/>
    <property type="match status" value="1"/>
</dbReference>
<dbReference type="SUPFAM" id="SSF50182">
    <property type="entry name" value="Sm-like ribonucleoproteins"/>
    <property type="match status" value="1"/>
</dbReference>
<dbReference type="PROSITE" id="PS52002">
    <property type="entry name" value="SM"/>
    <property type="match status" value="1"/>
</dbReference>
<feature type="initiator methionine" description="Removed" evidence="21">
    <location>
        <position position="1"/>
    </location>
</feature>
<feature type="chain" id="PRO_0000125536" description="Small nuclear ribonucleoprotein F">
    <location>
        <begin position="2"/>
        <end position="86"/>
    </location>
</feature>
<feature type="domain" description="Sm" evidence="1">
    <location>
        <begin position="6"/>
        <end position="78"/>
    </location>
</feature>
<feature type="modified residue" description="N-acetylserine" evidence="21">
    <location>
        <position position="2"/>
    </location>
</feature>
<feature type="sequence conflict" description="In Ref. 2; CAG33032." evidence="22" ref="2">
    <original>E</original>
    <variation>D</variation>
    <location>
        <position position="86"/>
    </location>
</feature>
<feature type="helix" evidence="35">
    <location>
        <begin position="7"/>
        <end position="14"/>
    </location>
</feature>
<feature type="strand" evidence="35">
    <location>
        <begin position="17"/>
        <end position="23"/>
    </location>
</feature>
<feature type="strand" evidence="35">
    <location>
        <begin position="28"/>
        <end position="36"/>
    </location>
</feature>
<feature type="strand" evidence="35">
    <location>
        <begin position="42"/>
        <end position="51"/>
    </location>
</feature>
<feature type="strand" evidence="35">
    <location>
        <begin position="54"/>
        <end position="64"/>
    </location>
</feature>
<feature type="helix" evidence="35">
    <location>
        <begin position="66"/>
        <end position="68"/>
    </location>
</feature>
<feature type="strand" evidence="35">
    <location>
        <begin position="69"/>
        <end position="74"/>
    </location>
</feature>